<comment type="function">
    <text evidence="1">Nucleotidyltransferase involved in the post-translational modification of proteins. It can catalyze the addition of adenosine monophosphate (AMP) or uridine monophosphate (UMP) to a protein, resulting in modifications known as AMPylation and UMPylation.</text>
</comment>
<comment type="catalytic activity">
    <reaction evidence="1">
        <text>L-seryl-[protein] + ATP = 3-O-(5'-adenylyl)-L-seryl-[protein] + diphosphate</text>
        <dbReference type="Rhea" id="RHEA:58120"/>
        <dbReference type="Rhea" id="RHEA-COMP:9863"/>
        <dbReference type="Rhea" id="RHEA-COMP:15073"/>
        <dbReference type="ChEBI" id="CHEBI:29999"/>
        <dbReference type="ChEBI" id="CHEBI:30616"/>
        <dbReference type="ChEBI" id="CHEBI:33019"/>
        <dbReference type="ChEBI" id="CHEBI:142516"/>
        <dbReference type="EC" id="2.7.7.108"/>
    </reaction>
</comment>
<comment type="catalytic activity">
    <reaction evidence="1">
        <text>L-threonyl-[protein] + ATP = 3-O-(5'-adenylyl)-L-threonyl-[protein] + diphosphate</text>
        <dbReference type="Rhea" id="RHEA:54292"/>
        <dbReference type="Rhea" id="RHEA-COMP:11060"/>
        <dbReference type="Rhea" id="RHEA-COMP:13847"/>
        <dbReference type="ChEBI" id="CHEBI:30013"/>
        <dbReference type="ChEBI" id="CHEBI:30616"/>
        <dbReference type="ChEBI" id="CHEBI:33019"/>
        <dbReference type="ChEBI" id="CHEBI:138113"/>
        <dbReference type="EC" id="2.7.7.108"/>
    </reaction>
</comment>
<comment type="catalytic activity">
    <reaction evidence="1">
        <text>L-tyrosyl-[protein] + ATP = O-(5'-adenylyl)-L-tyrosyl-[protein] + diphosphate</text>
        <dbReference type="Rhea" id="RHEA:54288"/>
        <dbReference type="Rhea" id="RHEA-COMP:10136"/>
        <dbReference type="Rhea" id="RHEA-COMP:13846"/>
        <dbReference type="ChEBI" id="CHEBI:30616"/>
        <dbReference type="ChEBI" id="CHEBI:33019"/>
        <dbReference type="ChEBI" id="CHEBI:46858"/>
        <dbReference type="ChEBI" id="CHEBI:83624"/>
        <dbReference type="EC" id="2.7.7.108"/>
    </reaction>
</comment>
<comment type="catalytic activity">
    <reaction evidence="1">
        <text>L-histidyl-[protein] + UTP = N(tele)-(5'-uridylyl)-L-histidyl-[protein] + diphosphate</text>
        <dbReference type="Rhea" id="RHEA:83891"/>
        <dbReference type="Rhea" id="RHEA-COMP:9745"/>
        <dbReference type="Rhea" id="RHEA-COMP:20239"/>
        <dbReference type="ChEBI" id="CHEBI:29979"/>
        <dbReference type="ChEBI" id="CHEBI:33019"/>
        <dbReference type="ChEBI" id="CHEBI:46398"/>
        <dbReference type="ChEBI" id="CHEBI:233474"/>
    </reaction>
</comment>
<comment type="catalytic activity">
    <reaction evidence="1">
        <text>L-seryl-[protein] + UTP = O-(5'-uridylyl)-L-seryl-[protein] + diphosphate</text>
        <dbReference type="Rhea" id="RHEA:64604"/>
        <dbReference type="Rhea" id="RHEA-COMP:9863"/>
        <dbReference type="Rhea" id="RHEA-COMP:16635"/>
        <dbReference type="ChEBI" id="CHEBI:29999"/>
        <dbReference type="ChEBI" id="CHEBI:33019"/>
        <dbReference type="ChEBI" id="CHEBI:46398"/>
        <dbReference type="ChEBI" id="CHEBI:156051"/>
    </reaction>
</comment>
<comment type="catalytic activity">
    <reaction evidence="1">
        <text>L-tyrosyl-[protein] + UTP = O-(5'-uridylyl)-L-tyrosyl-[protein] + diphosphate</text>
        <dbReference type="Rhea" id="RHEA:83887"/>
        <dbReference type="Rhea" id="RHEA-COMP:10136"/>
        <dbReference type="Rhea" id="RHEA-COMP:20238"/>
        <dbReference type="ChEBI" id="CHEBI:33019"/>
        <dbReference type="ChEBI" id="CHEBI:46398"/>
        <dbReference type="ChEBI" id="CHEBI:46858"/>
        <dbReference type="ChEBI" id="CHEBI:90602"/>
    </reaction>
</comment>
<comment type="cofactor">
    <cofactor evidence="1">
        <name>Mg(2+)</name>
        <dbReference type="ChEBI" id="CHEBI:18420"/>
    </cofactor>
    <cofactor evidence="1">
        <name>Mn(2+)</name>
        <dbReference type="ChEBI" id="CHEBI:29035"/>
    </cofactor>
</comment>
<comment type="similarity">
    <text evidence="1">Belongs to the SELO family.</text>
</comment>
<dbReference type="EC" id="2.7.7.-" evidence="1"/>
<dbReference type="EC" id="2.7.7.108" evidence="1"/>
<dbReference type="EMBL" id="BX294150">
    <property type="protein sequence ID" value="CAD76547.1"/>
    <property type="molecule type" value="Genomic_DNA"/>
</dbReference>
<dbReference type="RefSeq" id="NP_869161.1">
    <property type="nucleotide sequence ID" value="NC_005027.1"/>
</dbReference>
<dbReference type="RefSeq" id="WP_011122546.1">
    <property type="nucleotide sequence ID" value="NC_005027.1"/>
</dbReference>
<dbReference type="SMR" id="Q7UKT5"/>
<dbReference type="FunCoup" id="Q7UKT5">
    <property type="interactions" value="422"/>
</dbReference>
<dbReference type="STRING" id="243090.RB9953"/>
<dbReference type="EnsemblBacteria" id="CAD76547">
    <property type="protein sequence ID" value="CAD76547"/>
    <property type="gene ID" value="RB9953"/>
</dbReference>
<dbReference type="KEGG" id="rba:RB9953"/>
<dbReference type="PATRIC" id="fig|243090.15.peg.4791"/>
<dbReference type="eggNOG" id="COG0397">
    <property type="taxonomic scope" value="Bacteria"/>
</dbReference>
<dbReference type="HOGENOM" id="CLU_010245_4_0_0"/>
<dbReference type="InParanoid" id="Q7UKT5"/>
<dbReference type="OrthoDB" id="9773505at2"/>
<dbReference type="Proteomes" id="UP000001025">
    <property type="component" value="Chromosome"/>
</dbReference>
<dbReference type="GO" id="GO:0070733">
    <property type="term" value="F:AMPylase activity"/>
    <property type="evidence" value="ECO:0000318"/>
    <property type="project" value="GO_Central"/>
</dbReference>
<dbReference type="GO" id="GO:0005524">
    <property type="term" value="F:ATP binding"/>
    <property type="evidence" value="ECO:0007669"/>
    <property type="project" value="UniProtKB-UniRule"/>
</dbReference>
<dbReference type="GO" id="GO:0000287">
    <property type="term" value="F:magnesium ion binding"/>
    <property type="evidence" value="ECO:0007669"/>
    <property type="project" value="UniProtKB-UniRule"/>
</dbReference>
<dbReference type="HAMAP" id="MF_00692">
    <property type="entry name" value="YdiU_SelO"/>
    <property type="match status" value="1"/>
</dbReference>
<dbReference type="InterPro" id="IPR003846">
    <property type="entry name" value="SelO"/>
</dbReference>
<dbReference type="NCBIfam" id="NF000658">
    <property type="entry name" value="PRK00029.1"/>
    <property type="match status" value="1"/>
</dbReference>
<dbReference type="PANTHER" id="PTHR32057">
    <property type="entry name" value="PROTEIN ADENYLYLTRANSFERASE SELO, MITOCHONDRIAL"/>
    <property type="match status" value="1"/>
</dbReference>
<dbReference type="PANTHER" id="PTHR32057:SF14">
    <property type="entry name" value="PROTEIN ADENYLYLTRANSFERASE SELO, MITOCHONDRIAL"/>
    <property type="match status" value="1"/>
</dbReference>
<dbReference type="Pfam" id="PF02696">
    <property type="entry name" value="SelO"/>
    <property type="match status" value="1"/>
</dbReference>
<feature type="chain" id="PRO_0000121425" description="Protein nucleotidyltransferase YdiU">
    <location>
        <begin position="1"/>
        <end position="540"/>
    </location>
</feature>
<feature type="active site" description="Proton acceptor" evidence="1">
    <location>
        <position position="277"/>
    </location>
</feature>
<feature type="binding site" evidence="1">
    <location>
        <position position="102"/>
    </location>
    <ligand>
        <name>ATP</name>
        <dbReference type="ChEBI" id="CHEBI:30616"/>
    </ligand>
</feature>
<feature type="binding site" evidence="1">
    <location>
        <position position="104"/>
    </location>
    <ligand>
        <name>ATP</name>
        <dbReference type="ChEBI" id="CHEBI:30616"/>
    </ligand>
</feature>
<feature type="binding site" evidence="1">
    <location>
        <position position="105"/>
    </location>
    <ligand>
        <name>ATP</name>
        <dbReference type="ChEBI" id="CHEBI:30616"/>
    </ligand>
</feature>
<feature type="binding site" evidence="1">
    <location>
        <position position="125"/>
    </location>
    <ligand>
        <name>ATP</name>
        <dbReference type="ChEBI" id="CHEBI:30616"/>
    </ligand>
</feature>
<feature type="binding site" evidence="1">
    <location>
        <position position="137"/>
    </location>
    <ligand>
        <name>ATP</name>
        <dbReference type="ChEBI" id="CHEBI:30616"/>
    </ligand>
</feature>
<feature type="binding site" evidence="1">
    <location>
        <position position="138"/>
    </location>
    <ligand>
        <name>ATP</name>
        <dbReference type="ChEBI" id="CHEBI:30616"/>
    </ligand>
</feature>
<feature type="binding site" evidence="1">
    <location>
        <position position="195"/>
    </location>
    <ligand>
        <name>ATP</name>
        <dbReference type="ChEBI" id="CHEBI:30616"/>
    </ligand>
</feature>
<feature type="binding site" evidence="1">
    <location>
        <position position="202"/>
    </location>
    <ligand>
        <name>ATP</name>
        <dbReference type="ChEBI" id="CHEBI:30616"/>
    </ligand>
</feature>
<feature type="binding site" evidence="1">
    <location>
        <position position="278"/>
    </location>
    <ligand>
        <name>Mg(2+)</name>
        <dbReference type="ChEBI" id="CHEBI:18420"/>
    </ligand>
</feature>
<feature type="binding site" evidence="1">
    <location>
        <position position="287"/>
    </location>
    <ligand>
        <name>ATP</name>
        <dbReference type="ChEBI" id="CHEBI:30616"/>
    </ligand>
</feature>
<feature type="binding site" evidence="1">
    <location>
        <position position="287"/>
    </location>
    <ligand>
        <name>Mg(2+)</name>
        <dbReference type="ChEBI" id="CHEBI:18420"/>
    </ligand>
</feature>
<accession>Q7UKT5</accession>
<sequence length="540" mass="60797">MTFDLTFDNRFTRDLPADTEPRNFTRQVHQAGFSRVKPTPVSAPKWVAGSKEVAELIGLDPKWLGSAELTEVLAGNALADGMDPFAMCYGGHQFGNWAGQLGDGRAINLGEVVTADEKHWTLQLKGAGLTPYSRTADGLAVLRSSVREFLCSEAMHHLGVPTTRALSLVLTGEKVLRDMFYDGHPEHELGAIVCRVAPSFIRFGNFEIFASREDTETLQTLVEHTIRSEFSHLLSEPDAEIGPDVIAAMFEEVCRTTAEMVVHWMRVGFVHGVMNTDNMSILGLTIDYGPYGWLEDYDPDWTPNTTDAQGRRYRYAHQPQIAQWNLVALANALVPLVKEAEPLQRGIAVYVEEFQKSWHSMMAGKLGLSKYESETDDELVDSLLTLLQLAETDMTIFYRRLADIELGTREQPVTLELAAVLRHLSEAHYVADEVTEEYQQALMDWMRSYQSRVLADDGFPAEDSQRRQRMNAVNPKYVLRNYLAQLAIDACDKGDDSLVSELLEVLRRPYDDQPGKERFAEKRPEWARHRPGCSMLSCSS</sequence>
<organism>
    <name type="scientific">Rhodopirellula baltica (strain DSM 10527 / NCIMB 13988 / SH1)</name>
    <dbReference type="NCBI Taxonomy" id="243090"/>
    <lineage>
        <taxon>Bacteria</taxon>
        <taxon>Pseudomonadati</taxon>
        <taxon>Planctomycetota</taxon>
        <taxon>Planctomycetia</taxon>
        <taxon>Pirellulales</taxon>
        <taxon>Pirellulaceae</taxon>
        <taxon>Rhodopirellula</taxon>
    </lineage>
</organism>
<gene>
    <name evidence="1" type="primary">ydiU</name>
    <name evidence="1" type="synonym">selO</name>
    <name type="ordered locus">RB9953</name>
</gene>
<keyword id="KW-0067">ATP-binding</keyword>
<keyword id="KW-0460">Magnesium</keyword>
<keyword id="KW-0464">Manganese</keyword>
<keyword id="KW-0479">Metal-binding</keyword>
<keyword id="KW-0547">Nucleotide-binding</keyword>
<keyword id="KW-0548">Nucleotidyltransferase</keyword>
<keyword id="KW-1185">Reference proteome</keyword>
<keyword id="KW-0808">Transferase</keyword>
<name>SELO_RHOBA</name>
<proteinExistence type="inferred from homology"/>
<reference key="1">
    <citation type="journal article" date="2003" name="Proc. Natl. Acad. Sci. U.S.A.">
        <title>Complete genome sequence of the marine planctomycete Pirellula sp. strain 1.</title>
        <authorList>
            <person name="Gloeckner F.O."/>
            <person name="Kube M."/>
            <person name="Bauer M."/>
            <person name="Teeling H."/>
            <person name="Lombardot T."/>
            <person name="Ludwig W."/>
            <person name="Gade D."/>
            <person name="Beck A."/>
            <person name="Borzym K."/>
            <person name="Heitmann K."/>
            <person name="Rabus R."/>
            <person name="Schlesner H."/>
            <person name="Amann R."/>
            <person name="Reinhardt R."/>
        </authorList>
    </citation>
    <scope>NUCLEOTIDE SEQUENCE [LARGE SCALE GENOMIC DNA]</scope>
    <source>
        <strain>DSM 10527 / NCIMB 13988 / SH1</strain>
    </source>
</reference>
<evidence type="ECO:0000255" key="1">
    <source>
        <dbReference type="HAMAP-Rule" id="MF_00692"/>
    </source>
</evidence>
<protein>
    <recommendedName>
        <fullName evidence="1">Protein nucleotidyltransferase YdiU</fullName>
        <ecNumber evidence="1">2.7.7.-</ecNumber>
    </recommendedName>
    <alternativeName>
        <fullName evidence="1">Protein adenylyltransferase YdiU</fullName>
        <ecNumber evidence="1">2.7.7.108</ecNumber>
    </alternativeName>
    <alternativeName>
        <fullName evidence="1">Protein uridylyltransferase YdiU</fullName>
        <ecNumber evidence="1">2.7.7.-</ecNumber>
    </alternativeName>
</protein>